<name>GCST_SHEHH</name>
<reference key="1">
    <citation type="submission" date="2008-01" db="EMBL/GenBank/DDBJ databases">
        <title>Complete sequence of Shewanella halifaxensis HAW-EB4.</title>
        <authorList>
            <consortium name="US DOE Joint Genome Institute"/>
            <person name="Copeland A."/>
            <person name="Lucas S."/>
            <person name="Lapidus A."/>
            <person name="Glavina del Rio T."/>
            <person name="Dalin E."/>
            <person name="Tice H."/>
            <person name="Bruce D."/>
            <person name="Goodwin L."/>
            <person name="Pitluck S."/>
            <person name="Sims D."/>
            <person name="Brettin T."/>
            <person name="Detter J.C."/>
            <person name="Han C."/>
            <person name="Kuske C.R."/>
            <person name="Schmutz J."/>
            <person name="Larimer F."/>
            <person name="Land M."/>
            <person name="Hauser L."/>
            <person name="Kyrpides N."/>
            <person name="Kim E."/>
            <person name="Zhao J.-S."/>
            <person name="Richardson P."/>
        </authorList>
    </citation>
    <scope>NUCLEOTIDE SEQUENCE [LARGE SCALE GENOMIC DNA]</scope>
    <source>
        <strain>HAW-EB4</strain>
    </source>
</reference>
<evidence type="ECO:0000255" key="1">
    <source>
        <dbReference type="HAMAP-Rule" id="MF_00259"/>
    </source>
</evidence>
<gene>
    <name evidence="1" type="primary">gcvT</name>
    <name type="ordered locus">Shal_3375</name>
</gene>
<keyword id="KW-0032">Aminotransferase</keyword>
<keyword id="KW-0808">Transferase</keyword>
<dbReference type="EC" id="2.1.2.10" evidence="1"/>
<dbReference type="EMBL" id="CP000931">
    <property type="protein sequence ID" value="ABZ77921.1"/>
    <property type="molecule type" value="Genomic_DNA"/>
</dbReference>
<dbReference type="RefSeq" id="WP_012278441.1">
    <property type="nucleotide sequence ID" value="NC_010334.1"/>
</dbReference>
<dbReference type="SMR" id="B0TSG7"/>
<dbReference type="STRING" id="458817.Shal_3375"/>
<dbReference type="KEGG" id="shl:Shal_3375"/>
<dbReference type="eggNOG" id="COG0404">
    <property type="taxonomic scope" value="Bacteria"/>
</dbReference>
<dbReference type="HOGENOM" id="CLU_007884_10_2_6"/>
<dbReference type="OrthoDB" id="9774591at2"/>
<dbReference type="Proteomes" id="UP000001317">
    <property type="component" value="Chromosome"/>
</dbReference>
<dbReference type="GO" id="GO:0005829">
    <property type="term" value="C:cytosol"/>
    <property type="evidence" value="ECO:0007669"/>
    <property type="project" value="TreeGrafter"/>
</dbReference>
<dbReference type="GO" id="GO:0005960">
    <property type="term" value="C:glycine cleavage complex"/>
    <property type="evidence" value="ECO:0007669"/>
    <property type="project" value="InterPro"/>
</dbReference>
<dbReference type="GO" id="GO:0004047">
    <property type="term" value="F:aminomethyltransferase activity"/>
    <property type="evidence" value="ECO:0007669"/>
    <property type="project" value="UniProtKB-UniRule"/>
</dbReference>
<dbReference type="GO" id="GO:0008483">
    <property type="term" value="F:transaminase activity"/>
    <property type="evidence" value="ECO:0007669"/>
    <property type="project" value="UniProtKB-KW"/>
</dbReference>
<dbReference type="GO" id="GO:0019464">
    <property type="term" value="P:glycine decarboxylation via glycine cleavage system"/>
    <property type="evidence" value="ECO:0007669"/>
    <property type="project" value="UniProtKB-UniRule"/>
</dbReference>
<dbReference type="FunFam" id="2.40.30.110:FF:000001">
    <property type="entry name" value="Aminomethyltransferase"/>
    <property type="match status" value="1"/>
</dbReference>
<dbReference type="FunFam" id="3.30.70.1400:FF:000001">
    <property type="entry name" value="Aminomethyltransferase"/>
    <property type="match status" value="1"/>
</dbReference>
<dbReference type="FunFam" id="4.10.1250.10:FF:000001">
    <property type="entry name" value="Aminomethyltransferase"/>
    <property type="match status" value="1"/>
</dbReference>
<dbReference type="Gene3D" id="2.40.30.110">
    <property type="entry name" value="Aminomethyltransferase beta-barrel domains"/>
    <property type="match status" value="1"/>
</dbReference>
<dbReference type="Gene3D" id="3.30.70.1400">
    <property type="entry name" value="Aminomethyltransferase beta-barrel domains"/>
    <property type="match status" value="1"/>
</dbReference>
<dbReference type="Gene3D" id="4.10.1250.10">
    <property type="entry name" value="Aminomethyltransferase fragment"/>
    <property type="match status" value="1"/>
</dbReference>
<dbReference type="Gene3D" id="3.30.1360.120">
    <property type="entry name" value="Probable tRNA modification gtpase trme, domain 1"/>
    <property type="match status" value="1"/>
</dbReference>
<dbReference type="HAMAP" id="MF_00259">
    <property type="entry name" value="GcvT"/>
    <property type="match status" value="1"/>
</dbReference>
<dbReference type="InterPro" id="IPR006223">
    <property type="entry name" value="GCS_T"/>
</dbReference>
<dbReference type="InterPro" id="IPR022903">
    <property type="entry name" value="GCS_T_bac"/>
</dbReference>
<dbReference type="InterPro" id="IPR013977">
    <property type="entry name" value="GCST_C"/>
</dbReference>
<dbReference type="InterPro" id="IPR006222">
    <property type="entry name" value="GCV_T_N"/>
</dbReference>
<dbReference type="InterPro" id="IPR028896">
    <property type="entry name" value="GcvT/YgfZ/DmdA"/>
</dbReference>
<dbReference type="InterPro" id="IPR029043">
    <property type="entry name" value="GcvT/YgfZ_C"/>
</dbReference>
<dbReference type="InterPro" id="IPR027266">
    <property type="entry name" value="TrmE/GcvT_dom1"/>
</dbReference>
<dbReference type="NCBIfam" id="TIGR00528">
    <property type="entry name" value="gcvT"/>
    <property type="match status" value="1"/>
</dbReference>
<dbReference type="NCBIfam" id="NF001567">
    <property type="entry name" value="PRK00389.1"/>
    <property type="match status" value="1"/>
</dbReference>
<dbReference type="PANTHER" id="PTHR43757">
    <property type="entry name" value="AMINOMETHYLTRANSFERASE"/>
    <property type="match status" value="1"/>
</dbReference>
<dbReference type="PANTHER" id="PTHR43757:SF2">
    <property type="entry name" value="AMINOMETHYLTRANSFERASE, MITOCHONDRIAL"/>
    <property type="match status" value="1"/>
</dbReference>
<dbReference type="Pfam" id="PF01571">
    <property type="entry name" value="GCV_T"/>
    <property type="match status" value="1"/>
</dbReference>
<dbReference type="Pfam" id="PF08669">
    <property type="entry name" value="GCV_T_C"/>
    <property type="match status" value="1"/>
</dbReference>
<dbReference type="PIRSF" id="PIRSF006487">
    <property type="entry name" value="GcvT"/>
    <property type="match status" value="1"/>
</dbReference>
<dbReference type="SUPFAM" id="SSF101790">
    <property type="entry name" value="Aminomethyltransferase beta-barrel domain"/>
    <property type="match status" value="1"/>
</dbReference>
<dbReference type="SUPFAM" id="SSF103025">
    <property type="entry name" value="Folate-binding domain"/>
    <property type="match status" value="1"/>
</dbReference>
<protein>
    <recommendedName>
        <fullName evidence="1">Aminomethyltransferase</fullName>
        <ecNumber evidence="1">2.1.2.10</ecNumber>
    </recommendedName>
    <alternativeName>
        <fullName evidence="1">Glycine cleavage system T protein</fullName>
    </alternativeName>
</protein>
<sequence>MANKTVLFNKHLESNGKMVDFHGWDMPLNYGSQIEEHHAVRQDAGMFDVSHMTVVDVIGDDACAFLRKLLANDVAKLKVPGKALYGGMLDHNGGVIDDLITYYLSDTEYRIVVNSATREKDLAWINEQVNGFSVEVTERPELAMIAVQGPNAKAKAATVFNAEQNAAIEGMKPFFGVQTGSLFIATTGYTGETGYEVIVPEADAEALWQAFLEAGIKPCGLGARDTLRLEAGMNLYGLDMDESVNPLAANMGWTVAWEPADRDFNGRQALEKIKAEGTDKLVGLIMDAKGVIRHGMSVFFTDSDGVEQQGIITSGTFSPTLGYSIAMARVPRSIGDVAEVEMRKKRVPVKVIAPSFVRNGKQAF</sequence>
<accession>B0TSG7</accession>
<proteinExistence type="inferred from homology"/>
<organism>
    <name type="scientific">Shewanella halifaxensis (strain HAW-EB4)</name>
    <dbReference type="NCBI Taxonomy" id="458817"/>
    <lineage>
        <taxon>Bacteria</taxon>
        <taxon>Pseudomonadati</taxon>
        <taxon>Pseudomonadota</taxon>
        <taxon>Gammaproteobacteria</taxon>
        <taxon>Alteromonadales</taxon>
        <taxon>Shewanellaceae</taxon>
        <taxon>Shewanella</taxon>
    </lineage>
</organism>
<comment type="function">
    <text evidence="1">The glycine cleavage system catalyzes the degradation of glycine.</text>
</comment>
<comment type="catalytic activity">
    <reaction evidence="1">
        <text>N(6)-[(R)-S(8)-aminomethyldihydrolipoyl]-L-lysyl-[protein] + (6S)-5,6,7,8-tetrahydrofolate = N(6)-[(R)-dihydrolipoyl]-L-lysyl-[protein] + (6R)-5,10-methylene-5,6,7,8-tetrahydrofolate + NH4(+)</text>
        <dbReference type="Rhea" id="RHEA:16945"/>
        <dbReference type="Rhea" id="RHEA-COMP:10475"/>
        <dbReference type="Rhea" id="RHEA-COMP:10492"/>
        <dbReference type="ChEBI" id="CHEBI:15636"/>
        <dbReference type="ChEBI" id="CHEBI:28938"/>
        <dbReference type="ChEBI" id="CHEBI:57453"/>
        <dbReference type="ChEBI" id="CHEBI:83100"/>
        <dbReference type="ChEBI" id="CHEBI:83143"/>
        <dbReference type="EC" id="2.1.2.10"/>
    </reaction>
</comment>
<comment type="subunit">
    <text evidence="1">The glycine cleavage system is composed of four proteins: P, T, L and H.</text>
</comment>
<comment type="similarity">
    <text evidence="1">Belongs to the GcvT family.</text>
</comment>
<feature type="chain" id="PRO_1000078592" description="Aminomethyltransferase">
    <location>
        <begin position="1"/>
        <end position="364"/>
    </location>
</feature>